<feature type="chain" id="PRO_1000074226" description="Probable tRNA sulfurtransferase">
    <location>
        <begin position="1"/>
        <end position="401"/>
    </location>
</feature>
<feature type="domain" description="THUMP" evidence="1">
    <location>
        <begin position="60"/>
        <end position="165"/>
    </location>
</feature>
<feature type="binding site" evidence="1">
    <location>
        <begin position="183"/>
        <end position="184"/>
    </location>
    <ligand>
        <name>ATP</name>
        <dbReference type="ChEBI" id="CHEBI:30616"/>
    </ligand>
</feature>
<feature type="binding site" evidence="1">
    <location>
        <begin position="208"/>
        <end position="209"/>
    </location>
    <ligand>
        <name>ATP</name>
        <dbReference type="ChEBI" id="CHEBI:30616"/>
    </ligand>
</feature>
<feature type="binding site" evidence="1">
    <location>
        <position position="265"/>
    </location>
    <ligand>
        <name>ATP</name>
        <dbReference type="ChEBI" id="CHEBI:30616"/>
    </ligand>
</feature>
<feature type="binding site" evidence="1">
    <location>
        <position position="287"/>
    </location>
    <ligand>
        <name>ATP</name>
        <dbReference type="ChEBI" id="CHEBI:30616"/>
    </ligand>
</feature>
<feature type="binding site" evidence="1">
    <location>
        <position position="296"/>
    </location>
    <ligand>
        <name>ATP</name>
        <dbReference type="ChEBI" id="CHEBI:30616"/>
    </ligand>
</feature>
<organism>
    <name type="scientific">Geobacillus thermodenitrificans (strain NG80-2)</name>
    <dbReference type="NCBI Taxonomy" id="420246"/>
    <lineage>
        <taxon>Bacteria</taxon>
        <taxon>Bacillati</taxon>
        <taxon>Bacillota</taxon>
        <taxon>Bacilli</taxon>
        <taxon>Bacillales</taxon>
        <taxon>Anoxybacillaceae</taxon>
        <taxon>Geobacillus</taxon>
    </lineage>
</organism>
<accession>A4IRT9</accession>
<sequence length="401" mass="45401">MKYDRILIRYGEMTTKGKNRNIFVRRLKNNIARKLQAFPRIKIEYMRDRMYILLNGEPHEPIIDKLKTVFGIHSFSLAMKCENDLAAIKETALAAVRQLPYKGKTFKVSARRVDKQFPYRSDELNHEVGAHILRQTEDLTVNVRQPDIDVRIEVRQDGTYVTCHDIFGAGGLPVGTSGKAMLMLSGGIDSPVAGYLAMKRGLEIEAVHFFSPPFTSERAKQKVIDLVRKLTAYGGKIKLHIVPFTEVQQAIYQGVPNEYSLISTRRAMLKITDALRRRQRGLAIVTGESLGQVASQTLESMYVINEVTNTPVLRPLISMDKMEIIEIAKQIDTHDISILPYEDCCTIFTPRAPKTKPKKEKVLQHESQLDLAPLLEKAINETETIVIDEEAGQADEFTALF</sequence>
<keyword id="KW-0067">ATP-binding</keyword>
<keyword id="KW-0963">Cytoplasm</keyword>
<keyword id="KW-0547">Nucleotide-binding</keyword>
<keyword id="KW-0694">RNA-binding</keyword>
<keyword id="KW-0784">Thiamine biosynthesis</keyword>
<keyword id="KW-0808">Transferase</keyword>
<keyword id="KW-0820">tRNA-binding</keyword>
<name>THII_GEOTN</name>
<dbReference type="EC" id="2.8.1.4" evidence="1"/>
<dbReference type="EMBL" id="CP000557">
    <property type="protein sequence ID" value="ABO68043.1"/>
    <property type="molecule type" value="Genomic_DNA"/>
</dbReference>
<dbReference type="RefSeq" id="WP_011887981.1">
    <property type="nucleotide sequence ID" value="NC_009328.1"/>
</dbReference>
<dbReference type="SMR" id="A4IRT9"/>
<dbReference type="GeneID" id="87623161"/>
<dbReference type="KEGG" id="gtn:GTNG_2698"/>
<dbReference type="eggNOG" id="COG0301">
    <property type="taxonomic scope" value="Bacteria"/>
</dbReference>
<dbReference type="HOGENOM" id="CLU_037952_4_0_9"/>
<dbReference type="UniPathway" id="UPA00060"/>
<dbReference type="Proteomes" id="UP000001578">
    <property type="component" value="Chromosome"/>
</dbReference>
<dbReference type="GO" id="GO:0005829">
    <property type="term" value="C:cytosol"/>
    <property type="evidence" value="ECO:0007669"/>
    <property type="project" value="TreeGrafter"/>
</dbReference>
<dbReference type="GO" id="GO:0005524">
    <property type="term" value="F:ATP binding"/>
    <property type="evidence" value="ECO:0007669"/>
    <property type="project" value="UniProtKB-UniRule"/>
</dbReference>
<dbReference type="GO" id="GO:0004810">
    <property type="term" value="F:CCA tRNA nucleotidyltransferase activity"/>
    <property type="evidence" value="ECO:0007669"/>
    <property type="project" value="InterPro"/>
</dbReference>
<dbReference type="GO" id="GO:0000049">
    <property type="term" value="F:tRNA binding"/>
    <property type="evidence" value="ECO:0007669"/>
    <property type="project" value="UniProtKB-UniRule"/>
</dbReference>
<dbReference type="GO" id="GO:0140741">
    <property type="term" value="F:tRNA-uracil-4 sulfurtransferase activity"/>
    <property type="evidence" value="ECO:0007669"/>
    <property type="project" value="UniProtKB-EC"/>
</dbReference>
<dbReference type="GO" id="GO:0009228">
    <property type="term" value="P:thiamine biosynthetic process"/>
    <property type="evidence" value="ECO:0007669"/>
    <property type="project" value="UniProtKB-KW"/>
</dbReference>
<dbReference type="GO" id="GO:0009229">
    <property type="term" value="P:thiamine diphosphate biosynthetic process"/>
    <property type="evidence" value="ECO:0007669"/>
    <property type="project" value="UniProtKB-UniRule"/>
</dbReference>
<dbReference type="GO" id="GO:0052837">
    <property type="term" value="P:thiazole biosynthetic process"/>
    <property type="evidence" value="ECO:0007669"/>
    <property type="project" value="TreeGrafter"/>
</dbReference>
<dbReference type="GO" id="GO:0002937">
    <property type="term" value="P:tRNA 4-thiouridine biosynthesis"/>
    <property type="evidence" value="ECO:0007669"/>
    <property type="project" value="TreeGrafter"/>
</dbReference>
<dbReference type="CDD" id="cd01712">
    <property type="entry name" value="PPase_ThiI"/>
    <property type="match status" value="1"/>
</dbReference>
<dbReference type="CDD" id="cd11716">
    <property type="entry name" value="THUMP_ThiI"/>
    <property type="match status" value="1"/>
</dbReference>
<dbReference type="FunFam" id="3.40.50.620:FF:000053">
    <property type="entry name" value="Probable tRNA sulfurtransferase"/>
    <property type="match status" value="1"/>
</dbReference>
<dbReference type="Gene3D" id="3.30.2130.30">
    <property type="match status" value="1"/>
</dbReference>
<dbReference type="Gene3D" id="3.40.50.620">
    <property type="entry name" value="HUPs"/>
    <property type="match status" value="1"/>
</dbReference>
<dbReference type="HAMAP" id="MF_00021">
    <property type="entry name" value="ThiI"/>
    <property type="match status" value="1"/>
</dbReference>
<dbReference type="InterPro" id="IPR014729">
    <property type="entry name" value="Rossmann-like_a/b/a_fold"/>
</dbReference>
<dbReference type="InterPro" id="IPR020536">
    <property type="entry name" value="ThiI_AANH"/>
</dbReference>
<dbReference type="InterPro" id="IPR054173">
    <property type="entry name" value="ThiI_fer"/>
</dbReference>
<dbReference type="InterPro" id="IPR049961">
    <property type="entry name" value="ThiI_N"/>
</dbReference>
<dbReference type="InterPro" id="IPR004114">
    <property type="entry name" value="THUMP_dom"/>
</dbReference>
<dbReference type="InterPro" id="IPR049962">
    <property type="entry name" value="THUMP_ThiI"/>
</dbReference>
<dbReference type="InterPro" id="IPR003720">
    <property type="entry name" value="tRNA_STrfase"/>
</dbReference>
<dbReference type="InterPro" id="IPR050102">
    <property type="entry name" value="tRNA_sulfurtransferase_ThiI"/>
</dbReference>
<dbReference type="NCBIfam" id="TIGR00342">
    <property type="entry name" value="tRNA uracil 4-sulfurtransferase ThiI"/>
    <property type="match status" value="1"/>
</dbReference>
<dbReference type="PANTHER" id="PTHR43209">
    <property type="entry name" value="TRNA SULFURTRANSFERASE"/>
    <property type="match status" value="1"/>
</dbReference>
<dbReference type="PANTHER" id="PTHR43209:SF1">
    <property type="entry name" value="TRNA SULFURTRANSFERASE"/>
    <property type="match status" value="1"/>
</dbReference>
<dbReference type="Pfam" id="PF02568">
    <property type="entry name" value="ThiI"/>
    <property type="match status" value="1"/>
</dbReference>
<dbReference type="Pfam" id="PF22025">
    <property type="entry name" value="ThiI_fer"/>
    <property type="match status" value="1"/>
</dbReference>
<dbReference type="Pfam" id="PF02926">
    <property type="entry name" value="THUMP"/>
    <property type="match status" value="1"/>
</dbReference>
<dbReference type="SMART" id="SM00981">
    <property type="entry name" value="THUMP"/>
    <property type="match status" value="1"/>
</dbReference>
<dbReference type="SUPFAM" id="SSF52402">
    <property type="entry name" value="Adenine nucleotide alpha hydrolases-like"/>
    <property type="match status" value="1"/>
</dbReference>
<dbReference type="SUPFAM" id="SSF143437">
    <property type="entry name" value="THUMP domain-like"/>
    <property type="match status" value="1"/>
</dbReference>
<dbReference type="PROSITE" id="PS51165">
    <property type="entry name" value="THUMP"/>
    <property type="match status" value="1"/>
</dbReference>
<reference key="1">
    <citation type="journal article" date="2007" name="Proc. Natl. Acad. Sci. U.S.A.">
        <title>Genome and proteome of long-chain alkane degrading Geobacillus thermodenitrificans NG80-2 isolated from a deep-subsurface oil reservoir.</title>
        <authorList>
            <person name="Feng L."/>
            <person name="Wang W."/>
            <person name="Cheng J."/>
            <person name="Ren Y."/>
            <person name="Zhao G."/>
            <person name="Gao C."/>
            <person name="Tang Y."/>
            <person name="Liu X."/>
            <person name="Han W."/>
            <person name="Peng X."/>
            <person name="Liu R."/>
            <person name="Wang L."/>
        </authorList>
    </citation>
    <scope>NUCLEOTIDE SEQUENCE [LARGE SCALE GENOMIC DNA]</scope>
    <source>
        <strain>NG80-2</strain>
    </source>
</reference>
<comment type="function">
    <text evidence="1">Catalyzes the ATP-dependent transfer of a sulfur to tRNA to produce 4-thiouridine in position 8 of tRNAs, which functions as a near-UV photosensor. Also catalyzes the transfer of sulfur to the sulfur carrier protein ThiS, forming ThiS-thiocarboxylate. This is a step in the synthesis of thiazole, in the thiamine biosynthesis pathway. The sulfur is donated as persulfide by IscS.</text>
</comment>
<comment type="catalytic activity">
    <reaction evidence="1">
        <text>[ThiI sulfur-carrier protein]-S-sulfanyl-L-cysteine + a uridine in tRNA + 2 reduced [2Fe-2S]-[ferredoxin] + ATP + H(+) = [ThiI sulfur-carrier protein]-L-cysteine + a 4-thiouridine in tRNA + 2 oxidized [2Fe-2S]-[ferredoxin] + AMP + diphosphate</text>
        <dbReference type="Rhea" id="RHEA:24176"/>
        <dbReference type="Rhea" id="RHEA-COMP:10000"/>
        <dbReference type="Rhea" id="RHEA-COMP:10001"/>
        <dbReference type="Rhea" id="RHEA-COMP:13337"/>
        <dbReference type="Rhea" id="RHEA-COMP:13338"/>
        <dbReference type="Rhea" id="RHEA-COMP:13339"/>
        <dbReference type="Rhea" id="RHEA-COMP:13340"/>
        <dbReference type="ChEBI" id="CHEBI:15378"/>
        <dbReference type="ChEBI" id="CHEBI:29950"/>
        <dbReference type="ChEBI" id="CHEBI:30616"/>
        <dbReference type="ChEBI" id="CHEBI:33019"/>
        <dbReference type="ChEBI" id="CHEBI:33737"/>
        <dbReference type="ChEBI" id="CHEBI:33738"/>
        <dbReference type="ChEBI" id="CHEBI:61963"/>
        <dbReference type="ChEBI" id="CHEBI:65315"/>
        <dbReference type="ChEBI" id="CHEBI:136798"/>
        <dbReference type="ChEBI" id="CHEBI:456215"/>
        <dbReference type="EC" id="2.8.1.4"/>
    </reaction>
</comment>
<comment type="catalytic activity">
    <reaction evidence="1">
        <text>[ThiS sulfur-carrier protein]-C-terminal Gly-Gly-AMP + S-sulfanyl-L-cysteinyl-[cysteine desulfurase] + AH2 = [ThiS sulfur-carrier protein]-C-terminal-Gly-aminoethanethioate + L-cysteinyl-[cysteine desulfurase] + A + AMP + 2 H(+)</text>
        <dbReference type="Rhea" id="RHEA:43340"/>
        <dbReference type="Rhea" id="RHEA-COMP:12157"/>
        <dbReference type="Rhea" id="RHEA-COMP:12158"/>
        <dbReference type="Rhea" id="RHEA-COMP:12910"/>
        <dbReference type="Rhea" id="RHEA-COMP:19908"/>
        <dbReference type="ChEBI" id="CHEBI:13193"/>
        <dbReference type="ChEBI" id="CHEBI:15378"/>
        <dbReference type="ChEBI" id="CHEBI:17499"/>
        <dbReference type="ChEBI" id="CHEBI:29950"/>
        <dbReference type="ChEBI" id="CHEBI:61963"/>
        <dbReference type="ChEBI" id="CHEBI:90618"/>
        <dbReference type="ChEBI" id="CHEBI:232372"/>
        <dbReference type="ChEBI" id="CHEBI:456215"/>
    </reaction>
</comment>
<comment type="pathway">
    <text evidence="1">Cofactor biosynthesis; thiamine diphosphate biosynthesis.</text>
</comment>
<comment type="subcellular location">
    <subcellularLocation>
        <location evidence="1">Cytoplasm</location>
    </subcellularLocation>
</comment>
<comment type="similarity">
    <text evidence="1">Belongs to the ThiI family.</text>
</comment>
<evidence type="ECO:0000255" key="1">
    <source>
        <dbReference type="HAMAP-Rule" id="MF_00021"/>
    </source>
</evidence>
<protein>
    <recommendedName>
        <fullName evidence="1">Probable tRNA sulfurtransferase</fullName>
        <ecNumber evidence="1">2.8.1.4</ecNumber>
    </recommendedName>
    <alternativeName>
        <fullName evidence="1">Sulfur carrier protein ThiS sulfurtransferase</fullName>
    </alternativeName>
    <alternativeName>
        <fullName evidence="1">Thiamine biosynthesis protein ThiI</fullName>
    </alternativeName>
    <alternativeName>
        <fullName evidence="1">tRNA 4-thiouridine synthase</fullName>
    </alternativeName>
</protein>
<gene>
    <name evidence="1" type="primary">thiI</name>
    <name type="ordered locus">GTNG_2698</name>
</gene>
<proteinExistence type="inferred from homology"/>